<accession>Q85IN4</accession>
<proteinExistence type="inferred from homology"/>
<protein>
    <recommendedName>
        <fullName>Cytochrome b</fullName>
    </recommendedName>
    <alternativeName>
        <fullName>Complex III subunit 3</fullName>
    </alternativeName>
    <alternativeName>
        <fullName>Complex III subunit III</fullName>
    </alternativeName>
    <alternativeName>
        <fullName>Cytochrome b-c1 complex subunit 3</fullName>
    </alternativeName>
    <alternativeName>
        <fullName>Ubiquinol-cytochrome-c reductase complex cytochrome b subunit</fullName>
    </alternativeName>
</protein>
<keyword id="KW-0249">Electron transport</keyword>
<keyword id="KW-0349">Heme</keyword>
<keyword id="KW-0408">Iron</keyword>
<keyword id="KW-0472">Membrane</keyword>
<keyword id="KW-0479">Metal-binding</keyword>
<keyword id="KW-0496">Mitochondrion</keyword>
<keyword id="KW-0999">Mitochondrion inner membrane</keyword>
<keyword id="KW-0679">Respiratory chain</keyword>
<keyword id="KW-0812">Transmembrane</keyword>
<keyword id="KW-1133">Transmembrane helix</keyword>
<keyword id="KW-0813">Transport</keyword>
<keyword id="KW-0830">Ubiquinone</keyword>
<feature type="chain" id="PRO_0000061170" description="Cytochrome b">
    <location>
        <begin position="1"/>
        <end position="379"/>
    </location>
</feature>
<feature type="transmembrane region" description="Helical" evidence="2">
    <location>
        <begin position="33"/>
        <end position="53"/>
    </location>
</feature>
<feature type="transmembrane region" description="Helical" evidence="2">
    <location>
        <begin position="77"/>
        <end position="98"/>
    </location>
</feature>
<feature type="transmembrane region" description="Helical" evidence="2">
    <location>
        <begin position="113"/>
        <end position="133"/>
    </location>
</feature>
<feature type="transmembrane region" description="Helical" evidence="2">
    <location>
        <begin position="178"/>
        <end position="198"/>
    </location>
</feature>
<feature type="transmembrane region" description="Helical" evidence="2">
    <location>
        <begin position="226"/>
        <end position="246"/>
    </location>
</feature>
<feature type="transmembrane region" description="Helical" evidence="2">
    <location>
        <begin position="288"/>
        <end position="308"/>
    </location>
</feature>
<feature type="transmembrane region" description="Helical" evidence="2">
    <location>
        <begin position="320"/>
        <end position="340"/>
    </location>
</feature>
<feature type="transmembrane region" description="Helical" evidence="2">
    <location>
        <begin position="347"/>
        <end position="367"/>
    </location>
</feature>
<feature type="binding site" description="axial binding residue" evidence="2">
    <location>
        <position position="83"/>
    </location>
    <ligand>
        <name>heme b</name>
        <dbReference type="ChEBI" id="CHEBI:60344"/>
        <label>b562</label>
    </ligand>
    <ligandPart>
        <name>Fe</name>
        <dbReference type="ChEBI" id="CHEBI:18248"/>
    </ligandPart>
</feature>
<feature type="binding site" description="axial binding residue" evidence="2">
    <location>
        <position position="97"/>
    </location>
    <ligand>
        <name>heme b</name>
        <dbReference type="ChEBI" id="CHEBI:60344"/>
        <label>b566</label>
    </ligand>
    <ligandPart>
        <name>Fe</name>
        <dbReference type="ChEBI" id="CHEBI:18248"/>
    </ligandPart>
</feature>
<feature type="binding site" description="axial binding residue" evidence="2">
    <location>
        <position position="182"/>
    </location>
    <ligand>
        <name>heme b</name>
        <dbReference type="ChEBI" id="CHEBI:60344"/>
        <label>b562</label>
    </ligand>
    <ligandPart>
        <name>Fe</name>
        <dbReference type="ChEBI" id="CHEBI:18248"/>
    </ligandPart>
</feature>
<feature type="binding site" description="axial binding residue" evidence="2">
    <location>
        <position position="196"/>
    </location>
    <ligand>
        <name>heme b</name>
        <dbReference type="ChEBI" id="CHEBI:60344"/>
        <label>b566</label>
    </ligand>
    <ligandPart>
        <name>Fe</name>
        <dbReference type="ChEBI" id="CHEBI:18248"/>
    </ligandPart>
</feature>
<feature type="binding site" evidence="2">
    <location>
        <position position="201"/>
    </location>
    <ligand>
        <name>a ubiquinone</name>
        <dbReference type="ChEBI" id="CHEBI:16389"/>
    </ligand>
</feature>
<gene>
    <name type="primary">MT-CYB</name>
    <name type="synonym">COB</name>
    <name type="synonym">CYTB</name>
    <name type="synonym">MTCYB</name>
</gene>
<comment type="function">
    <text evidence="2">Component of the ubiquinol-cytochrome c reductase complex (complex III or cytochrome b-c1 complex) that is part of the mitochondrial respiratory chain. The b-c1 complex mediates electron transfer from ubiquinol to cytochrome c. Contributes to the generation of a proton gradient across the mitochondrial membrane that is then used for ATP synthesis.</text>
</comment>
<comment type="cofactor">
    <cofactor evidence="2">
        <name>heme b</name>
        <dbReference type="ChEBI" id="CHEBI:60344"/>
    </cofactor>
    <text evidence="2">Binds 2 heme b groups non-covalently.</text>
</comment>
<comment type="subunit">
    <text evidence="2">The cytochrome bc1 complex contains 11 subunits: 3 respiratory subunits (MT-CYB, CYC1 and UQCRFS1), 2 core proteins (UQCRC1 and UQCRC2) and 6 low-molecular weight proteins (UQCRH/QCR6, UQCRB/QCR7, UQCRQ/QCR8, UQCR10/QCR9, UQCR11/QCR10 and a cleavage product of UQCRFS1). This cytochrome bc1 complex then forms a dimer.</text>
</comment>
<comment type="subcellular location">
    <subcellularLocation>
        <location evidence="2">Mitochondrion inner membrane</location>
        <topology evidence="2">Multi-pass membrane protein</topology>
    </subcellularLocation>
</comment>
<comment type="miscellaneous">
    <text evidence="1">Heme 1 (or BL or b562) is low-potential and absorbs at about 562 nm, and heme 2 (or BH or b566) is high-potential and absorbs at about 566 nm.</text>
</comment>
<comment type="similarity">
    <text evidence="3 4">Belongs to the cytochrome b family.</text>
</comment>
<comment type="caution">
    <text evidence="2">The full-length protein contains only eight transmembrane helices, not nine as predicted by bioinformatics tools.</text>
</comment>
<name>CYB_MELMS</name>
<geneLocation type="mitochondrion"/>
<reference key="1">
    <citation type="journal article" date="2003" name="Syst. Biol.">
        <title>Type I STS markers are more informative than cytochrome B in phylogenetic reconstruction of the Mustelidae (Mammalia: Carnivora).</title>
        <authorList>
            <person name="Koepfli K.-P."/>
            <person name="Wayne R.K."/>
        </authorList>
    </citation>
    <scope>NUCLEOTIDE SEQUENCE [GENOMIC DNA]</scope>
</reference>
<sequence length="379" mass="42556">MTNIRKTHPLTKIINNSFIDLPAPSNISAWWNFGSLLGICLILQILTGLFLAMHYSSDTTTAFSSVTHICRDVNYGWIIRYMHANGASMFFICLFMHVGRGLYYGSYMFPETWNIGIILLLAVMATAFMGYVLPWGQMSFWGATVITNLLSAIPYIGTNLVEWIWGGFSVDKATLTRFFAFHFILPFIVSALAAVHLLFLHETGSNNPSGIPSDSDKIPFHPYYTIKDILGALLLILTLMVLVLFSPDLLGDPDNYTPANPLNTPPHIKPEWYFLFAYAILRSIPNKLGGVLALAFSILILAVVPLLHTSKQRSMMFRPLSQCLFWLLVADLLTLTWIGGQPVEHPFITIGQLASILYFTILLVFMPVISIIENNLLKW</sequence>
<evidence type="ECO:0000250" key="1"/>
<evidence type="ECO:0000250" key="2">
    <source>
        <dbReference type="UniProtKB" id="P00157"/>
    </source>
</evidence>
<evidence type="ECO:0000255" key="3">
    <source>
        <dbReference type="PROSITE-ProRule" id="PRU00967"/>
    </source>
</evidence>
<evidence type="ECO:0000255" key="4">
    <source>
        <dbReference type="PROSITE-ProRule" id="PRU00968"/>
    </source>
</evidence>
<organism>
    <name type="scientific">Melogale moschata</name>
    <name type="common">Chinese ferret-badger</name>
    <dbReference type="NCBI Taxonomy" id="204267"/>
    <lineage>
        <taxon>Eukaryota</taxon>
        <taxon>Metazoa</taxon>
        <taxon>Chordata</taxon>
        <taxon>Craniata</taxon>
        <taxon>Vertebrata</taxon>
        <taxon>Euteleostomi</taxon>
        <taxon>Mammalia</taxon>
        <taxon>Eutheria</taxon>
        <taxon>Laurasiatheria</taxon>
        <taxon>Carnivora</taxon>
        <taxon>Caniformia</taxon>
        <taxon>Musteloidea</taxon>
        <taxon>Mustelidae</taxon>
        <taxon>Helictidinae</taxon>
        <taxon>Melogale</taxon>
    </lineage>
</organism>
<dbReference type="EMBL" id="AF498158">
    <property type="protein sequence ID" value="AAP19704.1"/>
    <property type="molecule type" value="Genomic_DNA"/>
</dbReference>
<dbReference type="RefSeq" id="YP_007625340.1">
    <property type="nucleotide sequence ID" value="NC_020644.1"/>
</dbReference>
<dbReference type="SMR" id="Q85IN4"/>
<dbReference type="GeneID" id="14841893"/>
<dbReference type="CTD" id="4519"/>
<dbReference type="GO" id="GO:0005743">
    <property type="term" value="C:mitochondrial inner membrane"/>
    <property type="evidence" value="ECO:0007669"/>
    <property type="project" value="UniProtKB-SubCell"/>
</dbReference>
<dbReference type="GO" id="GO:0045275">
    <property type="term" value="C:respiratory chain complex III"/>
    <property type="evidence" value="ECO:0007669"/>
    <property type="project" value="InterPro"/>
</dbReference>
<dbReference type="GO" id="GO:0046872">
    <property type="term" value="F:metal ion binding"/>
    <property type="evidence" value="ECO:0007669"/>
    <property type="project" value="UniProtKB-KW"/>
</dbReference>
<dbReference type="GO" id="GO:0008121">
    <property type="term" value="F:ubiquinol-cytochrome-c reductase activity"/>
    <property type="evidence" value="ECO:0007669"/>
    <property type="project" value="InterPro"/>
</dbReference>
<dbReference type="GO" id="GO:0006122">
    <property type="term" value="P:mitochondrial electron transport, ubiquinol to cytochrome c"/>
    <property type="evidence" value="ECO:0007669"/>
    <property type="project" value="TreeGrafter"/>
</dbReference>
<dbReference type="CDD" id="cd00290">
    <property type="entry name" value="cytochrome_b_C"/>
    <property type="match status" value="1"/>
</dbReference>
<dbReference type="CDD" id="cd00284">
    <property type="entry name" value="Cytochrome_b_N"/>
    <property type="match status" value="1"/>
</dbReference>
<dbReference type="FunFam" id="1.20.810.10:FF:000002">
    <property type="entry name" value="Cytochrome b"/>
    <property type="match status" value="1"/>
</dbReference>
<dbReference type="Gene3D" id="1.20.810.10">
    <property type="entry name" value="Cytochrome Bc1 Complex, Chain C"/>
    <property type="match status" value="1"/>
</dbReference>
<dbReference type="InterPro" id="IPR005798">
    <property type="entry name" value="Cyt_b/b6_C"/>
</dbReference>
<dbReference type="InterPro" id="IPR036150">
    <property type="entry name" value="Cyt_b/b6_C_sf"/>
</dbReference>
<dbReference type="InterPro" id="IPR005797">
    <property type="entry name" value="Cyt_b/b6_N"/>
</dbReference>
<dbReference type="InterPro" id="IPR027387">
    <property type="entry name" value="Cytb/b6-like_sf"/>
</dbReference>
<dbReference type="InterPro" id="IPR030689">
    <property type="entry name" value="Cytochrome_b"/>
</dbReference>
<dbReference type="InterPro" id="IPR048260">
    <property type="entry name" value="Cytochrome_b_C_euk/bac"/>
</dbReference>
<dbReference type="InterPro" id="IPR048259">
    <property type="entry name" value="Cytochrome_b_N_euk/bac"/>
</dbReference>
<dbReference type="InterPro" id="IPR016174">
    <property type="entry name" value="Di-haem_cyt_TM"/>
</dbReference>
<dbReference type="PANTHER" id="PTHR19271">
    <property type="entry name" value="CYTOCHROME B"/>
    <property type="match status" value="1"/>
</dbReference>
<dbReference type="PANTHER" id="PTHR19271:SF16">
    <property type="entry name" value="CYTOCHROME B"/>
    <property type="match status" value="1"/>
</dbReference>
<dbReference type="Pfam" id="PF00032">
    <property type="entry name" value="Cytochrom_B_C"/>
    <property type="match status" value="1"/>
</dbReference>
<dbReference type="Pfam" id="PF00033">
    <property type="entry name" value="Cytochrome_B"/>
    <property type="match status" value="1"/>
</dbReference>
<dbReference type="PIRSF" id="PIRSF038885">
    <property type="entry name" value="COB"/>
    <property type="match status" value="1"/>
</dbReference>
<dbReference type="SUPFAM" id="SSF81648">
    <property type="entry name" value="a domain/subunit of cytochrome bc1 complex (Ubiquinol-cytochrome c reductase)"/>
    <property type="match status" value="1"/>
</dbReference>
<dbReference type="SUPFAM" id="SSF81342">
    <property type="entry name" value="Transmembrane di-heme cytochromes"/>
    <property type="match status" value="1"/>
</dbReference>
<dbReference type="PROSITE" id="PS51003">
    <property type="entry name" value="CYTB_CTER"/>
    <property type="match status" value="1"/>
</dbReference>
<dbReference type="PROSITE" id="PS51002">
    <property type="entry name" value="CYTB_NTER"/>
    <property type="match status" value="1"/>
</dbReference>